<evidence type="ECO:0000255" key="1">
    <source>
        <dbReference type="HAMAP-Rule" id="MF_00440"/>
    </source>
</evidence>
<comment type="function">
    <text evidence="1">Negatively regulates transcription of bacterial ribonucleotide reductase nrd genes and operons by binding to NrdR-boxes.</text>
</comment>
<comment type="cofactor">
    <cofactor evidence="1">
        <name>Zn(2+)</name>
        <dbReference type="ChEBI" id="CHEBI:29105"/>
    </cofactor>
    <text evidence="1">Binds 1 zinc ion.</text>
</comment>
<comment type="similarity">
    <text evidence="1">Belongs to the NrdR family.</text>
</comment>
<organism>
    <name type="scientific">Salmonella paratyphi A (strain AKU_12601)</name>
    <dbReference type="NCBI Taxonomy" id="554290"/>
    <lineage>
        <taxon>Bacteria</taxon>
        <taxon>Pseudomonadati</taxon>
        <taxon>Pseudomonadota</taxon>
        <taxon>Gammaproteobacteria</taxon>
        <taxon>Enterobacterales</taxon>
        <taxon>Enterobacteriaceae</taxon>
        <taxon>Salmonella</taxon>
    </lineage>
</organism>
<name>NRDR_SALPK</name>
<sequence>MHCPFCFAVDTKVIDSRLVGEGSSVRRRRQCLVCNERFTTFEVAELVMPRVIKSNDVREPFNEDKLRSGMLRALEKRPVSADDVEMALNHIKSQLRATGEREVPSKMIGNLVMEQLKKLDKVAYIRFASVYRSFEDIKDFGEEIARLQD</sequence>
<gene>
    <name evidence="1" type="primary">nrdR</name>
    <name type="ordered locus">SSPA2150</name>
</gene>
<protein>
    <recommendedName>
        <fullName evidence="1">Transcriptional repressor NrdR</fullName>
    </recommendedName>
</protein>
<proteinExistence type="inferred from homology"/>
<keyword id="KW-0067">ATP-binding</keyword>
<keyword id="KW-0238">DNA-binding</keyword>
<keyword id="KW-0479">Metal-binding</keyword>
<keyword id="KW-0547">Nucleotide-binding</keyword>
<keyword id="KW-0678">Repressor</keyword>
<keyword id="KW-0804">Transcription</keyword>
<keyword id="KW-0805">Transcription regulation</keyword>
<keyword id="KW-0862">Zinc</keyword>
<keyword id="KW-0863">Zinc-finger</keyword>
<feature type="chain" id="PRO_1000124546" description="Transcriptional repressor NrdR">
    <location>
        <begin position="1"/>
        <end position="149"/>
    </location>
</feature>
<feature type="domain" description="ATP-cone" evidence="1">
    <location>
        <begin position="49"/>
        <end position="139"/>
    </location>
</feature>
<feature type="zinc finger region" evidence="1">
    <location>
        <begin position="3"/>
        <end position="34"/>
    </location>
</feature>
<accession>B5BDB7</accession>
<dbReference type="EMBL" id="FM200053">
    <property type="protein sequence ID" value="CAR60360.1"/>
    <property type="molecule type" value="Genomic_DNA"/>
</dbReference>
<dbReference type="RefSeq" id="WP_000543533.1">
    <property type="nucleotide sequence ID" value="NC_011147.1"/>
</dbReference>
<dbReference type="SMR" id="B5BDB7"/>
<dbReference type="GeneID" id="66754886"/>
<dbReference type="KEGG" id="sek:SSPA2150"/>
<dbReference type="HOGENOM" id="CLU_108412_0_0_6"/>
<dbReference type="Proteomes" id="UP000001869">
    <property type="component" value="Chromosome"/>
</dbReference>
<dbReference type="GO" id="GO:0005524">
    <property type="term" value="F:ATP binding"/>
    <property type="evidence" value="ECO:0007669"/>
    <property type="project" value="UniProtKB-KW"/>
</dbReference>
<dbReference type="GO" id="GO:0003677">
    <property type="term" value="F:DNA binding"/>
    <property type="evidence" value="ECO:0007669"/>
    <property type="project" value="UniProtKB-KW"/>
</dbReference>
<dbReference type="GO" id="GO:0008270">
    <property type="term" value="F:zinc ion binding"/>
    <property type="evidence" value="ECO:0007669"/>
    <property type="project" value="UniProtKB-UniRule"/>
</dbReference>
<dbReference type="GO" id="GO:0045892">
    <property type="term" value="P:negative regulation of DNA-templated transcription"/>
    <property type="evidence" value="ECO:0007669"/>
    <property type="project" value="UniProtKB-UniRule"/>
</dbReference>
<dbReference type="HAMAP" id="MF_00440">
    <property type="entry name" value="NrdR"/>
    <property type="match status" value="1"/>
</dbReference>
<dbReference type="InterPro" id="IPR005144">
    <property type="entry name" value="ATP-cone_dom"/>
</dbReference>
<dbReference type="InterPro" id="IPR055173">
    <property type="entry name" value="NrdR-like_N"/>
</dbReference>
<dbReference type="InterPro" id="IPR003796">
    <property type="entry name" value="RNR_NrdR-like"/>
</dbReference>
<dbReference type="NCBIfam" id="TIGR00244">
    <property type="entry name" value="transcriptional regulator NrdR"/>
    <property type="match status" value="1"/>
</dbReference>
<dbReference type="PANTHER" id="PTHR30455">
    <property type="entry name" value="TRANSCRIPTIONAL REPRESSOR NRDR"/>
    <property type="match status" value="1"/>
</dbReference>
<dbReference type="PANTHER" id="PTHR30455:SF2">
    <property type="entry name" value="TRANSCRIPTIONAL REPRESSOR NRDR"/>
    <property type="match status" value="1"/>
</dbReference>
<dbReference type="Pfam" id="PF03477">
    <property type="entry name" value="ATP-cone"/>
    <property type="match status" value="1"/>
</dbReference>
<dbReference type="Pfam" id="PF22811">
    <property type="entry name" value="Zn_ribbon_NrdR"/>
    <property type="match status" value="1"/>
</dbReference>
<dbReference type="PROSITE" id="PS51161">
    <property type="entry name" value="ATP_CONE"/>
    <property type="match status" value="1"/>
</dbReference>
<reference key="1">
    <citation type="journal article" date="2009" name="BMC Genomics">
        <title>Pseudogene accumulation in the evolutionary histories of Salmonella enterica serovars Paratyphi A and Typhi.</title>
        <authorList>
            <person name="Holt K.E."/>
            <person name="Thomson N.R."/>
            <person name="Wain J."/>
            <person name="Langridge G.C."/>
            <person name="Hasan R."/>
            <person name="Bhutta Z.A."/>
            <person name="Quail M.A."/>
            <person name="Norbertczak H."/>
            <person name="Walker D."/>
            <person name="Simmonds M."/>
            <person name="White B."/>
            <person name="Bason N."/>
            <person name="Mungall K."/>
            <person name="Dougan G."/>
            <person name="Parkhill J."/>
        </authorList>
    </citation>
    <scope>NUCLEOTIDE SEQUENCE [LARGE SCALE GENOMIC DNA]</scope>
    <source>
        <strain>AKU_12601</strain>
    </source>
</reference>